<organism>
    <name type="scientific">Parasynechococcus marenigrum (strain WH8102)</name>
    <dbReference type="NCBI Taxonomy" id="84588"/>
    <lineage>
        <taxon>Bacteria</taxon>
        <taxon>Bacillati</taxon>
        <taxon>Cyanobacteriota</taxon>
        <taxon>Cyanophyceae</taxon>
        <taxon>Synechococcales</taxon>
        <taxon>Prochlorococcaceae</taxon>
        <taxon>Parasynechococcus</taxon>
        <taxon>Parasynechococcus marenigrum</taxon>
    </lineage>
</organism>
<dbReference type="EC" id="1.3.7.7" evidence="1"/>
<dbReference type="EMBL" id="BX569693">
    <property type="protein sequence ID" value="CAE08239.1"/>
    <property type="molecule type" value="Genomic_DNA"/>
</dbReference>
<dbReference type="RefSeq" id="WP_011128584.1">
    <property type="nucleotide sequence ID" value="NC_005070.1"/>
</dbReference>
<dbReference type="SMR" id="Q7U5I3"/>
<dbReference type="STRING" id="84588.SYNW1724"/>
<dbReference type="KEGG" id="syw:SYNW1724"/>
<dbReference type="eggNOG" id="COG2710">
    <property type="taxonomic scope" value="Bacteria"/>
</dbReference>
<dbReference type="HOGENOM" id="CLU_025470_0_0_3"/>
<dbReference type="UniPathway" id="UPA00670"/>
<dbReference type="Proteomes" id="UP000001422">
    <property type="component" value="Chromosome"/>
</dbReference>
<dbReference type="GO" id="GO:0051539">
    <property type="term" value="F:4 iron, 4 sulfur cluster binding"/>
    <property type="evidence" value="ECO:0007669"/>
    <property type="project" value="UniProtKB-UniRule"/>
</dbReference>
<dbReference type="GO" id="GO:0005524">
    <property type="term" value="F:ATP binding"/>
    <property type="evidence" value="ECO:0007669"/>
    <property type="project" value="UniProtKB-UniRule"/>
</dbReference>
<dbReference type="GO" id="GO:0046872">
    <property type="term" value="F:metal ion binding"/>
    <property type="evidence" value="ECO:0007669"/>
    <property type="project" value="UniProtKB-KW"/>
</dbReference>
<dbReference type="GO" id="GO:0016730">
    <property type="term" value="F:oxidoreductase activity, acting on iron-sulfur proteins as donors"/>
    <property type="evidence" value="ECO:0007669"/>
    <property type="project" value="InterPro"/>
</dbReference>
<dbReference type="GO" id="GO:0016636">
    <property type="term" value="F:oxidoreductase activity, acting on the CH-CH group of donors, iron-sulfur protein as acceptor"/>
    <property type="evidence" value="ECO:0007669"/>
    <property type="project" value="UniProtKB-UniRule"/>
</dbReference>
<dbReference type="GO" id="GO:0036068">
    <property type="term" value="P:light-independent chlorophyll biosynthetic process"/>
    <property type="evidence" value="ECO:0007669"/>
    <property type="project" value="UniProtKB-UniRule"/>
</dbReference>
<dbReference type="GO" id="GO:0019685">
    <property type="term" value="P:photosynthesis, dark reaction"/>
    <property type="evidence" value="ECO:0007669"/>
    <property type="project" value="InterPro"/>
</dbReference>
<dbReference type="Gene3D" id="1.20.89.20">
    <property type="match status" value="1"/>
</dbReference>
<dbReference type="Gene3D" id="3.40.50.1980">
    <property type="entry name" value="Nitrogenase molybdenum iron protein domain"/>
    <property type="match status" value="3"/>
</dbReference>
<dbReference type="Gene3D" id="1.10.8.550">
    <property type="entry name" value="Proto-chlorophyllide reductase 57 kD subunit B"/>
    <property type="match status" value="1"/>
</dbReference>
<dbReference type="HAMAP" id="MF_00353">
    <property type="entry name" value="ChlB_BchB"/>
    <property type="match status" value="1"/>
</dbReference>
<dbReference type="InterPro" id="IPR050152">
    <property type="entry name" value="ChlB/BchB/BchZ"/>
</dbReference>
<dbReference type="InterPro" id="IPR013580">
    <property type="entry name" value="LI-POR_suB-like_C"/>
</dbReference>
<dbReference type="InterPro" id="IPR000510">
    <property type="entry name" value="Nase/OxRdtase_comp1"/>
</dbReference>
<dbReference type="InterPro" id="IPR042298">
    <property type="entry name" value="P-CP_red_C"/>
</dbReference>
<dbReference type="InterPro" id="IPR005969">
    <property type="entry name" value="Protochl_reductB"/>
</dbReference>
<dbReference type="InterPro" id="IPR016209">
    <property type="entry name" value="Protochlorophyllide_Rdtase"/>
</dbReference>
<dbReference type="NCBIfam" id="TIGR01278">
    <property type="entry name" value="DPOR_BchB"/>
    <property type="match status" value="1"/>
</dbReference>
<dbReference type="NCBIfam" id="NF002790">
    <property type="entry name" value="PRK02910.1-4"/>
    <property type="match status" value="1"/>
</dbReference>
<dbReference type="PANTHER" id="PTHR33712">
    <property type="entry name" value="LIGHT-INDEPENDENT PROTOCHLOROPHYLLIDE REDUCTASE SUBUNIT B"/>
    <property type="match status" value="1"/>
</dbReference>
<dbReference type="PANTHER" id="PTHR33712:SF7">
    <property type="entry name" value="LIGHT-INDEPENDENT PROTOCHLOROPHYLLIDE REDUCTASE SUBUNIT B"/>
    <property type="match status" value="1"/>
</dbReference>
<dbReference type="Pfam" id="PF00148">
    <property type="entry name" value="Oxidored_nitro"/>
    <property type="match status" value="1"/>
</dbReference>
<dbReference type="Pfam" id="PF08369">
    <property type="entry name" value="PCP_red"/>
    <property type="match status" value="1"/>
</dbReference>
<dbReference type="PIRSF" id="PIRSF000163">
    <property type="entry name" value="PCP_ChlB"/>
    <property type="match status" value="1"/>
</dbReference>
<dbReference type="SUPFAM" id="SSF53807">
    <property type="entry name" value="Helical backbone' metal receptor"/>
    <property type="match status" value="1"/>
</dbReference>
<gene>
    <name evidence="1" type="primary">chlB</name>
    <name type="ordered locus">SYNW1724</name>
</gene>
<protein>
    <recommendedName>
        <fullName evidence="1">Light-independent protochlorophyllide reductase subunit B</fullName>
        <shortName evidence="1">DPOR subunit B</shortName>
        <shortName evidence="1">LI-POR subunit B</shortName>
        <ecNumber evidence="1">1.3.7.7</ecNumber>
    </recommendedName>
</protein>
<comment type="function">
    <text evidence="1">Component of the dark-operative protochlorophyllide reductase (DPOR) that uses Mg-ATP and reduced ferredoxin to reduce ring D of protochlorophyllide (Pchlide) to form chlorophyllide a (Chlide). This reaction is light-independent. The NB-protein (ChlN-ChlB) is the catalytic component of the complex.</text>
</comment>
<comment type="catalytic activity">
    <reaction evidence="1">
        <text>chlorophyllide a + oxidized 2[4Fe-4S]-[ferredoxin] + 2 ADP + 2 phosphate = protochlorophyllide a + reduced 2[4Fe-4S]-[ferredoxin] + 2 ATP + 2 H2O</text>
        <dbReference type="Rhea" id="RHEA:28202"/>
        <dbReference type="Rhea" id="RHEA-COMP:10002"/>
        <dbReference type="Rhea" id="RHEA-COMP:10004"/>
        <dbReference type="ChEBI" id="CHEBI:15377"/>
        <dbReference type="ChEBI" id="CHEBI:30616"/>
        <dbReference type="ChEBI" id="CHEBI:33722"/>
        <dbReference type="ChEBI" id="CHEBI:33723"/>
        <dbReference type="ChEBI" id="CHEBI:43474"/>
        <dbReference type="ChEBI" id="CHEBI:83348"/>
        <dbReference type="ChEBI" id="CHEBI:83350"/>
        <dbReference type="ChEBI" id="CHEBI:456216"/>
        <dbReference type="EC" id="1.3.7.7"/>
    </reaction>
</comment>
<comment type="cofactor">
    <cofactor evidence="1">
        <name>[4Fe-4S] cluster</name>
        <dbReference type="ChEBI" id="CHEBI:49883"/>
    </cofactor>
    <text evidence="1">Binds 1 [4Fe-4S] cluster per heterodimer. The cluster is bound at the heterodimer interface by residues from both subunits.</text>
</comment>
<comment type="pathway">
    <text evidence="1">Porphyrin-containing compound metabolism; chlorophyll biosynthesis (light-independent).</text>
</comment>
<comment type="subunit">
    <text evidence="1">Protochlorophyllide reductase is composed of three subunits; ChlL, ChlN and ChlB. Forms a heterotetramer of two ChlB and two ChlN subunits.</text>
</comment>
<comment type="similarity">
    <text evidence="1">Belongs to the ChlB/BchB/BchZ family.</text>
</comment>
<name>CHLB_PARMW</name>
<sequence>MDLTLWTYEGPPHVGAMRIAASMQGVHYVLHAPQGDTYADLLFTMIERRGQRPPVTYTTFQARDLGGDTAELVKRHVREAVDRFQPDALLVGESCTAELIQDQPGALAQGMGLTMPVVSLELPAYSKKENWGAAETLYQLVRGLLKQQVPAEPKHDPKRWQQQGRRPRVNLLGPSLLGFRCRDDVLEVQTLLTMHGIDVAVVAPLGAGVEDVHRLPEADLNICLYPEVAESTCLWLERNFGMPFSRTVPIGVGATHDFLVEVHTALGLEPPSPQEGYRRSRLPWYSESVDSTYLTGKRVFIFGDGSHAIAAARICSEELGFQVVGLGTYSREMARPVRAAAKGLGLEALICDDYLAVEAAMAEAAPELVLGTQMERHSAKRLGIPCAVISTPMHVQDVPARMSPQMGWEGANVIFDSWVHPLMMGLEEHLIGMFRHDFEFVDGHQSHLGHAGGSGASQESALSDVPEADEGYVVWTADGEAELKKIPFFVRGKVRRNAEAYARQVGCREISSETLYDAKAHFKA</sequence>
<feature type="chain" id="PRO_1000048428" description="Light-independent protochlorophyllide reductase subunit B">
    <location>
        <begin position="1"/>
        <end position="524"/>
    </location>
</feature>
<feature type="active site" description="Proton donor" evidence="1">
    <location>
        <position position="290"/>
    </location>
</feature>
<feature type="binding site" evidence="1">
    <location>
        <position position="36"/>
    </location>
    <ligand>
        <name>[4Fe-4S] cluster</name>
        <dbReference type="ChEBI" id="CHEBI:49883"/>
        <note>ligand shared with heterodimeric partner</note>
    </ligand>
</feature>
<feature type="binding site" evidence="1">
    <location>
        <begin position="425"/>
        <end position="426"/>
    </location>
    <ligand>
        <name>substrate</name>
    </ligand>
</feature>
<accession>Q7U5I3</accession>
<evidence type="ECO:0000255" key="1">
    <source>
        <dbReference type="HAMAP-Rule" id="MF_00353"/>
    </source>
</evidence>
<keyword id="KW-0004">4Fe-4S</keyword>
<keyword id="KW-0067">ATP-binding</keyword>
<keyword id="KW-0149">Chlorophyll biosynthesis</keyword>
<keyword id="KW-0408">Iron</keyword>
<keyword id="KW-0411">Iron-sulfur</keyword>
<keyword id="KW-0479">Metal-binding</keyword>
<keyword id="KW-0547">Nucleotide-binding</keyword>
<keyword id="KW-0560">Oxidoreductase</keyword>
<keyword id="KW-0602">Photosynthesis</keyword>
<reference key="1">
    <citation type="journal article" date="2003" name="Nature">
        <title>The genome of a motile marine Synechococcus.</title>
        <authorList>
            <person name="Palenik B."/>
            <person name="Brahamsha B."/>
            <person name="Larimer F.W."/>
            <person name="Land M.L."/>
            <person name="Hauser L."/>
            <person name="Chain P."/>
            <person name="Lamerdin J.E."/>
            <person name="Regala W."/>
            <person name="Allen E.E."/>
            <person name="McCarren J."/>
            <person name="Paulsen I.T."/>
            <person name="Dufresne A."/>
            <person name="Partensky F."/>
            <person name="Webb E.A."/>
            <person name="Waterbury J."/>
        </authorList>
    </citation>
    <scope>NUCLEOTIDE SEQUENCE [LARGE SCALE GENOMIC DNA]</scope>
    <source>
        <strain>WH8102</strain>
    </source>
</reference>
<proteinExistence type="inferred from homology"/>